<keyword id="KW-0963">Cytoplasm</keyword>
<keyword id="KW-1185">Reference proteome</keyword>
<keyword id="KW-0690">Ribosome biogenesis</keyword>
<proteinExistence type="inferred from homology"/>
<comment type="function">
    <text evidence="1">Required for maturation of 30S ribosomal subunits.</text>
</comment>
<comment type="subcellular location">
    <subcellularLocation>
        <location evidence="1">Cytoplasm</location>
    </subcellularLocation>
</comment>
<comment type="similarity">
    <text evidence="1">Belongs to the RimP family.</text>
</comment>
<name>RIMP_PARDP</name>
<reference key="1">
    <citation type="submission" date="2006-12" db="EMBL/GenBank/DDBJ databases">
        <title>Complete sequence of chromosome 1 of Paracoccus denitrificans PD1222.</title>
        <authorList>
            <person name="Copeland A."/>
            <person name="Lucas S."/>
            <person name="Lapidus A."/>
            <person name="Barry K."/>
            <person name="Detter J.C."/>
            <person name="Glavina del Rio T."/>
            <person name="Hammon N."/>
            <person name="Israni S."/>
            <person name="Dalin E."/>
            <person name="Tice H."/>
            <person name="Pitluck S."/>
            <person name="Munk A.C."/>
            <person name="Brettin T."/>
            <person name="Bruce D."/>
            <person name="Han C."/>
            <person name="Tapia R."/>
            <person name="Gilna P."/>
            <person name="Schmutz J."/>
            <person name="Larimer F."/>
            <person name="Land M."/>
            <person name="Hauser L."/>
            <person name="Kyrpides N."/>
            <person name="Lykidis A."/>
            <person name="Spiro S."/>
            <person name="Richardson D.J."/>
            <person name="Moir J.W.B."/>
            <person name="Ferguson S.J."/>
            <person name="van Spanning R.J.M."/>
            <person name="Richardson P."/>
        </authorList>
    </citation>
    <scope>NUCLEOTIDE SEQUENCE [LARGE SCALE GENOMIC DNA]</scope>
    <source>
        <strain>Pd 1222</strain>
    </source>
</reference>
<feature type="chain" id="PRO_0000384724" description="Ribosome maturation factor RimP">
    <location>
        <begin position="1"/>
        <end position="206"/>
    </location>
</feature>
<protein>
    <recommendedName>
        <fullName evidence="1">Ribosome maturation factor RimP</fullName>
    </recommendedName>
</protein>
<evidence type="ECO:0000255" key="1">
    <source>
        <dbReference type="HAMAP-Rule" id="MF_01077"/>
    </source>
</evidence>
<gene>
    <name evidence="1" type="primary">rimP</name>
    <name type="ordered locus">Pden_2591</name>
</gene>
<sequence>MTDLIAKTAIDRRLAEIISPVIEDLGFELVRIRLQGGKTATLQIMADRPEGGINVDDCADISTAVSAILDVEDPLEDAYHLEVSSPGIDRPLTRLKDFETFEGYEARLETNQPIDGRKRFKGVLAGVEKGEGGDEVLLNIEEGGETQTIGLNFDWLSDAKLVLTDELIAEMLRQKKDAGVQIENLDEAAFDEIETEAGEDNAAAKE</sequence>
<accession>A1B584</accession>
<dbReference type="EMBL" id="CP000489">
    <property type="protein sequence ID" value="ABL70678.1"/>
    <property type="molecule type" value="Genomic_DNA"/>
</dbReference>
<dbReference type="RefSeq" id="WP_011748871.1">
    <property type="nucleotide sequence ID" value="NC_008686.1"/>
</dbReference>
<dbReference type="SMR" id="A1B584"/>
<dbReference type="STRING" id="318586.Pden_2591"/>
<dbReference type="EnsemblBacteria" id="ABL70678">
    <property type="protein sequence ID" value="ABL70678"/>
    <property type="gene ID" value="Pden_2591"/>
</dbReference>
<dbReference type="GeneID" id="93450984"/>
<dbReference type="KEGG" id="pde:Pden_2591"/>
<dbReference type="eggNOG" id="COG0779">
    <property type="taxonomic scope" value="Bacteria"/>
</dbReference>
<dbReference type="HOGENOM" id="CLU_070525_0_1_5"/>
<dbReference type="OrthoDB" id="9805006at2"/>
<dbReference type="Proteomes" id="UP000000361">
    <property type="component" value="Chromosome 1"/>
</dbReference>
<dbReference type="GO" id="GO:0005829">
    <property type="term" value="C:cytosol"/>
    <property type="evidence" value="ECO:0007669"/>
    <property type="project" value="TreeGrafter"/>
</dbReference>
<dbReference type="GO" id="GO:0000028">
    <property type="term" value="P:ribosomal small subunit assembly"/>
    <property type="evidence" value="ECO:0007669"/>
    <property type="project" value="TreeGrafter"/>
</dbReference>
<dbReference type="GO" id="GO:0006412">
    <property type="term" value="P:translation"/>
    <property type="evidence" value="ECO:0007669"/>
    <property type="project" value="TreeGrafter"/>
</dbReference>
<dbReference type="CDD" id="cd01734">
    <property type="entry name" value="YlxS_C"/>
    <property type="match status" value="1"/>
</dbReference>
<dbReference type="FunFam" id="3.30.300.70:FF:000001">
    <property type="entry name" value="Ribosome maturation factor RimP"/>
    <property type="match status" value="1"/>
</dbReference>
<dbReference type="Gene3D" id="2.30.30.180">
    <property type="entry name" value="Ribosome maturation factor RimP, C-terminal domain"/>
    <property type="match status" value="1"/>
</dbReference>
<dbReference type="Gene3D" id="3.30.300.70">
    <property type="entry name" value="RimP-like superfamily, N-terminal"/>
    <property type="match status" value="1"/>
</dbReference>
<dbReference type="HAMAP" id="MF_01077">
    <property type="entry name" value="RimP"/>
    <property type="match status" value="1"/>
</dbReference>
<dbReference type="InterPro" id="IPR003728">
    <property type="entry name" value="Ribosome_maturation_RimP"/>
</dbReference>
<dbReference type="InterPro" id="IPR028998">
    <property type="entry name" value="RimP_C"/>
</dbReference>
<dbReference type="InterPro" id="IPR036847">
    <property type="entry name" value="RimP_C_sf"/>
</dbReference>
<dbReference type="InterPro" id="IPR028989">
    <property type="entry name" value="RimP_N"/>
</dbReference>
<dbReference type="InterPro" id="IPR035956">
    <property type="entry name" value="RimP_N_sf"/>
</dbReference>
<dbReference type="NCBIfam" id="NF000932">
    <property type="entry name" value="PRK00092.2-5"/>
    <property type="match status" value="1"/>
</dbReference>
<dbReference type="PANTHER" id="PTHR33867">
    <property type="entry name" value="RIBOSOME MATURATION FACTOR RIMP"/>
    <property type="match status" value="1"/>
</dbReference>
<dbReference type="PANTHER" id="PTHR33867:SF1">
    <property type="entry name" value="RIBOSOME MATURATION FACTOR RIMP"/>
    <property type="match status" value="1"/>
</dbReference>
<dbReference type="Pfam" id="PF17384">
    <property type="entry name" value="DUF150_C"/>
    <property type="match status" value="1"/>
</dbReference>
<dbReference type="Pfam" id="PF02576">
    <property type="entry name" value="RimP_N"/>
    <property type="match status" value="1"/>
</dbReference>
<dbReference type="SUPFAM" id="SSF74942">
    <property type="entry name" value="YhbC-like, C-terminal domain"/>
    <property type="match status" value="1"/>
</dbReference>
<dbReference type="SUPFAM" id="SSF75420">
    <property type="entry name" value="YhbC-like, N-terminal domain"/>
    <property type="match status" value="1"/>
</dbReference>
<organism>
    <name type="scientific">Paracoccus denitrificans (strain Pd 1222)</name>
    <dbReference type="NCBI Taxonomy" id="318586"/>
    <lineage>
        <taxon>Bacteria</taxon>
        <taxon>Pseudomonadati</taxon>
        <taxon>Pseudomonadota</taxon>
        <taxon>Alphaproteobacteria</taxon>
        <taxon>Rhodobacterales</taxon>
        <taxon>Paracoccaceae</taxon>
        <taxon>Paracoccus</taxon>
    </lineage>
</organism>